<keyword id="KW-0002">3D-structure</keyword>
<keyword id="KW-0903">Direct protein sequencing</keyword>
<keyword id="KW-1015">Disulfide bond</keyword>
<keyword id="KW-0325">Glycoprotein</keyword>
<keyword id="KW-0378">Hydrolase</keyword>
<keyword id="KW-0430">Lectin</keyword>
<keyword id="KW-0611">Plant defense</keyword>
<keyword id="KW-0652">Protein synthesis inhibitor</keyword>
<keyword id="KW-0677">Repeat</keyword>
<keyword id="KW-0732">Signal</keyword>
<keyword id="KW-0800">Toxin</keyword>
<comment type="function">
    <text>Non-toxic type 2 RIP which strongly inhibits mammalian protein synthesis but does not affect plant nor bacterial protein synthesis. The A chain is responsible for inhibiting protein synthesis through the catalytic inactivation of 60S ribosomal subunits by removing adenine from position 4,324 of 28S rRNA.</text>
</comment>
<comment type="function">
    <text>The B chain is a galactose-specific lectin that facilitates the binding of nigrin b to the cell membrane that precedes endocytosis.</text>
</comment>
<comment type="catalytic activity">
    <reaction>
        <text>Endohydrolysis of the N-glycosidic bond at one specific adenosine on the 28S rRNA.</text>
        <dbReference type="EC" id="3.2.2.22"/>
    </reaction>
</comment>
<comment type="subunit">
    <text>Disulfide-linked dimer of A and B chains.</text>
</comment>
<comment type="similarity">
    <text evidence="5">In the N-terminal section; belongs to the ribosome-inactivating protein family. Type 2 RIP subfamily.</text>
</comment>
<evidence type="ECO:0000250" key="1"/>
<evidence type="ECO:0000255" key="2"/>
<evidence type="ECO:0000255" key="3">
    <source>
        <dbReference type="PROSITE-ProRule" id="PRU00174"/>
    </source>
</evidence>
<evidence type="ECO:0000269" key="4">
    <source>
    </source>
</evidence>
<evidence type="ECO:0000305" key="5"/>
<evidence type="ECO:0007829" key="6">
    <source>
        <dbReference type="PDB" id="3C9Z"/>
    </source>
</evidence>
<accession>P33183</accession>
<accession>P33184</accession>
<accession>P93542</accession>
<organism>
    <name type="scientific">Sambucus nigra</name>
    <name type="common">European elder</name>
    <dbReference type="NCBI Taxonomy" id="4202"/>
    <lineage>
        <taxon>Eukaryota</taxon>
        <taxon>Viridiplantae</taxon>
        <taxon>Streptophyta</taxon>
        <taxon>Embryophyta</taxon>
        <taxon>Tracheophyta</taxon>
        <taxon>Spermatophyta</taxon>
        <taxon>Magnoliopsida</taxon>
        <taxon>eudicotyledons</taxon>
        <taxon>Gunneridae</taxon>
        <taxon>Pentapetalae</taxon>
        <taxon>asterids</taxon>
        <taxon>campanulids</taxon>
        <taxon>Dipsacales</taxon>
        <taxon>Adoxaceae</taxon>
        <taxon>Sambucus</taxon>
    </lineage>
</organism>
<feature type="signal peptide" evidence="4">
    <location>
        <begin position="1"/>
        <end position="25"/>
    </location>
</feature>
<feature type="chain" id="PRO_0000030744" description="Nigrin b A chain">
    <location>
        <begin position="26"/>
        <end position="297"/>
    </location>
</feature>
<feature type="chain" id="PRO_0000030745" description="Nigrin b B chain">
    <location>
        <begin position="298"/>
        <end position="563"/>
    </location>
</feature>
<feature type="domain" description="Ricin B-type lectin 1" evidence="3">
    <location>
        <begin position="305"/>
        <end position="431"/>
    </location>
</feature>
<feature type="repeat" description="1-alpha">
    <location>
        <begin position="316"/>
        <end position="356"/>
    </location>
</feature>
<feature type="repeat" description="1-beta">
    <location>
        <begin position="357"/>
        <end position="397"/>
    </location>
</feature>
<feature type="repeat" description="1-gamma">
    <location>
        <begin position="400"/>
        <end position="432"/>
    </location>
</feature>
<feature type="domain" description="Ricin B-type lectin 2" evidence="3">
    <location>
        <begin position="434"/>
        <end position="559"/>
    </location>
</feature>
<feature type="repeat" description="2-alpha">
    <location>
        <begin position="445"/>
        <end position="482"/>
    </location>
</feature>
<feature type="repeat" description="2-beta">
    <location>
        <begin position="486"/>
        <end position="524"/>
    </location>
</feature>
<feature type="repeat" description="2-gamma">
    <location>
        <begin position="527"/>
        <end position="554"/>
    </location>
</feature>
<feature type="active site" evidence="1">
    <location>
        <position position="188"/>
    </location>
</feature>
<feature type="glycosylation site" description="N-linked (GlcNAc...) asparagine" evidence="2">
    <location>
        <position position="221"/>
    </location>
</feature>
<feature type="glycosylation site" description="N-linked (GlcNAc...) asparagine" evidence="2">
    <location>
        <position position="368"/>
    </location>
</feature>
<feature type="glycosylation site" description="N-linked (GlcNAc...) asparagine" evidence="2">
    <location>
        <position position="376"/>
    </location>
</feature>
<feature type="glycosylation site" description="N-linked (GlcNAc...) asparagine" evidence="2">
    <location>
        <position position="483"/>
    </location>
</feature>
<feature type="glycosylation site" description="N-linked (GlcNAc...) asparagine" evidence="2">
    <location>
        <position position="537"/>
    </location>
</feature>
<feature type="disulfide bond" description="Interchain (between B and A chains)" evidence="3">
    <location>
        <begin position="274"/>
        <end position="302"/>
    </location>
</feature>
<feature type="disulfide bond" evidence="3">
    <location>
        <begin position="319"/>
        <end position="338"/>
    </location>
</feature>
<feature type="disulfide bond" evidence="3">
    <location>
        <begin position="360"/>
        <end position="377"/>
    </location>
</feature>
<feature type="disulfide bond" evidence="3">
    <location>
        <begin position="448"/>
        <end position="463"/>
    </location>
</feature>
<feature type="disulfide bond" evidence="3">
    <location>
        <begin position="489"/>
        <end position="506"/>
    </location>
</feature>
<feature type="sequence conflict" description="In Ref. 2; AA sequence." evidence="5" ref="2">
    <original>K</original>
    <variation>V</variation>
    <location>
        <position position="39"/>
    </location>
</feature>
<feature type="strand" evidence="6">
    <location>
        <begin position="308"/>
        <end position="313"/>
    </location>
</feature>
<feature type="helix" evidence="6">
    <location>
        <begin position="315"/>
        <end position="317"/>
    </location>
</feature>
<feature type="strand" evidence="6">
    <location>
        <begin position="319"/>
        <end position="322"/>
    </location>
</feature>
<feature type="helix" evidence="6">
    <location>
        <begin position="323"/>
        <end position="325"/>
    </location>
</feature>
<feature type="strand" evidence="6">
    <location>
        <begin position="332"/>
        <end position="336"/>
    </location>
</feature>
<feature type="helix" evidence="6">
    <location>
        <begin position="342"/>
        <end position="344"/>
    </location>
</feature>
<feature type="strand" evidence="6">
    <location>
        <begin position="346"/>
        <end position="348"/>
    </location>
</feature>
<feature type="strand" evidence="6">
    <location>
        <begin position="354"/>
        <end position="356"/>
    </location>
</feature>
<feature type="strand" evidence="6">
    <location>
        <begin position="359"/>
        <end position="367"/>
    </location>
</feature>
<feature type="strand" evidence="6">
    <location>
        <begin position="371"/>
        <end position="375"/>
    </location>
</feature>
<feature type="turn" evidence="6">
    <location>
        <begin position="377"/>
        <end position="379"/>
    </location>
</feature>
<feature type="helix" evidence="6">
    <location>
        <begin position="382"/>
        <end position="384"/>
    </location>
</feature>
<feature type="turn" evidence="6">
    <location>
        <begin position="398"/>
        <end position="400"/>
    </location>
</feature>
<feature type="strand" evidence="6">
    <location>
        <begin position="403"/>
        <end position="405"/>
    </location>
</feature>
<feature type="strand" evidence="6">
    <location>
        <begin position="407"/>
        <end position="410"/>
    </location>
</feature>
<feature type="strand" evidence="6">
    <location>
        <begin position="416"/>
        <end position="418"/>
    </location>
</feature>
<feature type="helix" evidence="6">
    <location>
        <begin position="424"/>
        <end position="426"/>
    </location>
</feature>
<feature type="strand" evidence="6">
    <location>
        <begin position="429"/>
        <end position="432"/>
    </location>
</feature>
<feature type="strand" evidence="6">
    <location>
        <begin position="437"/>
        <end position="442"/>
    </location>
</feature>
<feature type="helix" evidence="6">
    <location>
        <begin position="444"/>
        <end position="446"/>
    </location>
</feature>
<feature type="strand" evidence="6">
    <location>
        <begin position="448"/>
        <end position="450"/>
    </location>
</feature>
<feature type="strand" evidence="6">
    <location>
        <begin position="459"/>
        <end position="461"/>
    </location>
</feature>
<feature type="helix" evidence="6">
    <location>
        <begin position="468"/>
        <end position="470"/>
    </location>
</feature>
<feature type="strand" evidence="6">
    <location>
        <begin position="472"/>
        <end position="474"/>
    </location>
</feature>
<feature type="strand" evidence="6">
    <location>
        <begin position="480"/>
        <end position="482"/>
    </location>
</feature>
<feature type="strand" evidence="6">
    <location>
        <begin position="485"/>
        <end position="496"/>
    </location>
</feature>
<feature type="strand" evidence="6">
    <location>
        <begin position="500"/>
        <end position="505"/>
    </location>
</feature>
<feature type="helix" evidence="6">
    <location>
        <begin position="510"/>
        <end position="512"/>
    </location>
</feature>
<feature type="turn" evidence="6">
    <location>
        <begin position="525"/>
        <end position="527"/>
    </location>
</feature>
<feature type="strand" evidence="6">
    <location>
        <begin position="530"/>
        <end position="533"/>
    </location>
</feature>
<feature type="helix" evidence="6">
    <location>
        <begin position="534"/>
        <end position="536"/>
    </location>
</feature>
<feature type="helix" evidence="6">
    <location>
        <begin position="538"/>
        <end position="540"/>
    </location>
</feature>
<feature type="strand" evidence="6">
    <location>
        <begin position="543"/>
        <end position="546"/>
    </location>
</feature>
<feature type="helix" evidence="6">
    <location>
        <begin position="552"/>
        <end position="554"/>
    </location>
</feature>
<feature type="strand" evidence="6">
    <location>
        <begin position="557"/>
        <end position="560"/>
    </location>
</feature>
<dbReference type="EC" id="3.2.2.22"/>
<dbReference type="EMBL" id="U41299">
    <property type="protein sequence ID" value="AAB39475.1"/>
    <property type="molecule type" value="mRNA"/>
</dbReference>
<dbReference type="PIR" id="S37382">
    <property type="entry name" value="S37382"/>
</dbReference>
<dbReference type="PIR" id="S37383">
    <property type="entry name" value="S37383"/>
</dbReference>
<dbReference type="PDB" id="3C9Z">
    <property type="method" value="X-ray"/>
    <property type="resolution" value="1.35 A"/>
    <property type="chains" value="A=306-563"/>
</dbReference>
<dbReference type="PDB" id="3CA0">
    <property type="method" value="X-ray"/>
    <property type="resolution" value="1.95 A"/>
    <property type="chains" value="A=306-563"/>
</dbReference>
<dbReference type="PDB" id="3CA1">
    <property type="method" value="X-ray"/>
    <property type="resolution" value="1.55 A"/>
    <property type="chains" value="A=306-563"/>
</dbReference>
<dbReference type="PDB" id="3CA3">
    <property type="method" value="X-ray"/>
    <property type="resolution" value="1.55 A"/>
    <property type="chains" value="A=306-563"/>
</dbReference>
<dbReference type="PDB" id="3CA4">
    <property type="method" value="X-ray"/>
    <property type="resolution" value="1.55 A"/>
    <property type="chains" value="A=306-563"/>
</dbReference>
<dbReference type="PDB" id="3CA5">
    <property type="method" value="X-ray"/>
    <property type="resolution" value="1.55 A"/>
    <property type="chains" value="A=306-563"/>
</dbReference>
<dbReference type="PDB" id="3CA6">
    <property type="method" value="X-ray"/>
    <property type="resolution" value="1.40 A"/>
    <property type="chains" value="A=306-563"/>
</dbReference>
<dbReference type="PDB" id="3CAH">
    <property type="method" value="X-ray"/>
    <property type="resolution" value="1.55 A"/>
    <property type="chains" value="A=306-563"/>
</dbReference>
<dbReference type="PDBsum" id="3C9Z"/>
<dbReference type="PDBsum" id="3CA0"/>
<dbReference type="PDBsum" id="3CA1"/>
<dbReference type="PDBsum" id="3CA3"/>
<dbReference type="PDBsum" id="3CA4"/>
<dbReference type="PDBsum" id="3CA5"/>
<dbReference type="PDBsum" id="3CA6"/>
<dbReference type="PDBsum" id="3CAH"/>
<dbReference type="SMR" id="P33183"/>
<dbReference type="UniLectin" id="P33183"/>
<dbReference type="EvolutionaryTrace" id="P33183"/>
<dbReference type="GO" id="GO:0030246">
    <property type="term" value="F:carbohydrate binding"/>
    <property type="evidence" value="ECO:0007669"/>
    <property type="project" value="UniProtKB-KW"/>
</dbReference>
<dbReference type="GO" id="GO:0030598">
    <property type="term" value="F:rRNA N-glycosylase activity"/>
    <property type="evidence" value="ECO:0007669"/>
    <property type="project" value="UniProtKB-EC"/>
</dbReference>
<dbReference type="GO" id="GO:0090729">
    <property type="term" value="F:toxin activity"/>
    <property type="evidence" value="ECO:0007669"/>
    <property type="project" value="UniProtKB-KW"/>
</dbReference>
<dbReference type="GO" id="GO:0006952">
    <property type="term" value="P:defense response"/>
    <property type="evidence" value="ECO:0007669"/>
    <property type="project" value="UniProtKB-KW"/>
</dbReference>
<dbReference type="GO" id="GO:0017148">
    <property type="term" value="P:negative regulation of translation"/>
    <property type="evidence" value="ECO:0007669"/>
    <property type="project" value="UniProtKB-KW"/>
</dbReference>
<dbReference type="CDD" id="cd23483">
    <property type="entry name" value="beta-trefoil_Ricin_ebulin-like_rpt1"/>
    <property type="match status" value="1"/>
</dbReference>
<dbReference type="CDD" id="cd23490">
    <property type="entry name" value="beta-trefoil_Ricin_ebulin-like_rpt2"/>
    <property type="match status" value="1"/>
</dbReference>
<dbReference type="Gene3D" id="2.80.10.50">
    <property type="match status" value="2"/>
</dbReference>
<dbReference type="Gene3D" id="3.40.420.10">
    <property type="entry name" value="Ricin (A subunit), domain 1"/>
    <property type="match status" value="1"/>
</dbReference>
<dbReference type="Gene3D" id="4.10.470.10">
    <property type="entry name" value="Ricin (A Subunit), domain 2"/>
    <property type="match status" value="1"/>
</dbReference>
<dbReference type="InterPro" id="IPR036041">
    <property type="entry name" value="Ribosome-inact_prot_sf"/>
</dbReference>
<dbReference type="InterPro" id="IPR017989">
    <property type="entry name" value="Ribosome_inactivat_1/2"/>
</dbReference>
<dbReference type="InterPro" id="IPR001574">
    <property type="entry name" value="Ribosome_inactivat_prot"/>
</dbReference>
<dbReference type="InterPro" id="IPR017988">
    <property type="entry name" value="Ribosome_inactivat_prot_CS"/>
</dbReference>
<dbReference type="InterPro" id="IPR016138">
    <property type="entry name" value="Ribosome_inactivat_prot_sub1"/>
</dbReference>
<dbReference type="InterPro" id="IPR016139">
    <property type="entry name" value="Ribosome_inactivat_prot_sub2"/>
</dbReference>
<dbReference type="InterPro" id="IPR035992">
    <property type="entry name" value="Ricin_B-like_lectins"/>
</dbReference>
<dbReference type="InterPro" id="IPR000772">
    <property type="entry name" value="Ricin_B_lectin"/>
</dbReference>
<dbReference type="PANTHER" id="PTHR33453">
    <property type="match status" value="1"/>
</dbReference>
<dbReference type="PANTHER" id="PTHR33453:SF34">
    <property type="entry name" value="RIBOSOME-INACTIVATING PROTEIN"/>
    <property type="match status" value="1"/>
</dbReference>
<dbReference type="Pfam" id="PF00652">
    <property type="entry name" value="Ricin_B_lectin"/>
    <property type="match status" value="2"/>
</dbReference>
<dbReference type="Pfam" id="PF00161">
    <property type="entry name" value="RIP"/>
    <property type="match status" value="1"/>
</dbReference>
<dbReference type="PRINTS" id="PR00396">
    <property type="entry name" value="SHIGARICIN"/>
</dbReference>
<dbReference type="SMART" id="SM00458">
    <property type="entry name" value="RICIN"/>
    <property type="match status" value="2"/>
</dbReference>
<dbReference type="SUPFAM" id="SSF56371">
    <property type="entry name" value="Ribosome inactivating proteins (RIP)"/>
    <property type="match status" value="1"/>
</dbReference>
<dbReference type="SUPFAM" id="SSF50370">
    <property type="entry name" value="Ricin B-like lectins"/>
    <property type="match status" value="2"/>
</dbReference>
<dbReference type="PROSITE" id="PS50231">
    <property type="entry name" value="RICIN_B_LECTIN"/>
    <property type="match status" value="2"/>
</dbReference>
<dbReference type="PROSITE" id="PS00275">
    <property type="entry name" value="SHIGA_RICIN"/>
    <property type="match status" value="1"/>
</dbReference>
<sequence>MRVVAAAMLYFYIVVLAICSVGIQGIDYPSVSFNLDGAKSATYRDFLSNLRKTVATGTYEVNGLPVLRRESEVQVKSRFVLVPLTNYNGNTVTLAVDVTNLYVVAFSGNANSYFFKDATEVQKSNLFVGTKQNTLSFTGNYDNLETAANTRRESIELGPSPLDGAITSLYHGDSVARSLLVVIQMVSEAARFRYIEQEVRRSLQQATSFTPNALMLSMENNWSSMSLEIQQAGNNVSPFFGTVQLLNYDHTHRLVDNFEELYKITGIAILLFRCSSPSNDNAIRMPLDLAGEDNKYNDGETCTLRTSFTRNIVGRDGLCVDVRNGYDTDGTPLQLWPCGTQRNQRWTFDSDDTIRSMGKCMTANGLNNGSNIVIFNCSTAAENAIKWEVPIDGSIINPSSGLVMTAPRAASRTILLLEDNIYAASQGWTVTNNVKPIVASIVGYKEMCLQSNGENNGVWMEDCEATSLQQQWALYGDRTIRVNSTRGLCVTTNGYNSKDLIIILKCQGLPSQRWFFNSDGAIVNPKSRHVMDVRASNVSLREIIIFPATGNPNQQWVTQVLPS</sequence>
<reference key="1">
    <citation type="journal article" date="1996" name="Eur. J. Biochem.">
        <title>Characterization and molecular cloning of Sambucus nigra agglutinin V (nigrin b), a GalNAc-specific type-2 ribosome-inactivating protein from the bark of elderberry (Sambucus nigra).</title>
        <authorList>
            <person name="Van Damme E.J."/>
            <person name="Barre A."/>
            <person name="Rouge P."/>
            <person name="Van Leuven F."/>
            <person name="Peumans W.J."/>
        </authorList>
    </citation>
    <scope>NUCLEOTIDE SEQUENCE [MRNA]</scope>
    <source>
        <tissue>Bark</tissue>
    </source>
</reference>
<reference key="2">
    <citation type="journal article" date="1993" name="Plant Mol. Biol.">
        <title>Isolation and partial characterization of nigrin b, a non-toxic novel type 2 ribosome-inactivating protein from the bark of Sambucus nigra L.</title>
        <authorList>
            <person name="Girbes T."/>
            <person name="Citores L."/>
            <person name="Ferreras J.M."/>
            <person name="Rojo M.A."/>
            <person name="Iglesias R."/>
            <person name="Munoz R."/>
            <person name="Arias F.J."/>
            <person name="Calonge M."/>
            <person name="Garcia J.R."/>
            <person name="Mendez E."/>
        </authorList>
    </citation>
    <scope>PROTEIN SEQUENCE OF 26-49 AND 298-321</scope>
    <source>
        <tissue>Bark</tissue>
    </source>
</reference>
<protein>
    <recommendedName>
        <fullName>Nigrin b</fullName>
    </recommendedName>
    <alternativeName>
        <fullName>Agglutinin V</fullName>
    </alternativeName>
    <alternativeName>
        <fullName>SNAV</fullName>
    </alternativeName>
    <component>
        <recommendedName>
            <fullName>Nigrin b A chain</fullName>
            <ecNumber>3.2.2.22</ecNumber>
        </recommendedName>
        <alternativeName>
            <fullName>rRNA N-glycosidase</fullName>
        </alternativeName>
    </component>
    <component>
        <recommendedName>
            <fullName>Nigrin b B chain</fullName>
        </recommendedName>
    </component>
</protein>
<proteinExistence type="evidence at protein level"/>
<name>NIGB_SAMNI</name>